<protein>
    <recommendedName>
        <fullName>Probable D,D-dipeptide transport ATP-binding protein DdpF</fullName>
    </recommendedName>
</protein>
<evidence type="ECO:0000255" key="1">
    <source>
        <dbReference type="PROSITE-ProRule" id="PRU00434"/>
    </source>
</evidence>
<evidence type="ECO:0000269" key="2">
    <source>
    </source>
</evidence>
<evidence type="ECO:0000303" key="3">
    <source>
    </source>
</evidence>
<evidence type="ECO:0000305" key="4"/>
<evidence type="ECO:0000305" key="5">
    <source>
    </source>
</evidence>
<gene>
    <name evidence="3" type="primary">ddpF</name>
    <name type="synonym">yddO</name>
    <name type="ordered locus">b1483</name>
    <name type="ordered locus">JW1478</name>
</gene>
<comment type="function">
    <text evidence="5">Part of the ABC transporter complex DdpABCDF, which is probably involved in D,D-dipeptide transport (PubMed:9097039). Probably responsible for energy coupling to the transport system.</text>
</comment>
<comment type="subunit">
    <text evidence="4">The complex is composed of two ATP-binding proteins (DdpD and DdpF), two transmembrane proteins (DdpB and DdpC) and a solute-binding protein (DdpA).</text>
</comment>
<comment type="subcellular location">
    <subcellularLocation>
        <location evidence="4">Cell inner membrane</location>
        <topology evidence="4">Peripheral membrane protein</topology>
    </subcellularLocation>
</comment>
<comment type="induction">
    <text evidence="2">Induced by RpoS in stationary phase.</text>
</comment>
<comment type="similarity">
    <text evidence="4">Belongs to the ABC transporter superfamily.</text>
</comment>
<reference key="1">
    <citation type="journal article" date="1996" name="DNA Res.">
        <title>A 570-kb DNA sequence of the Escherichia coli K-12 genome corresponding to the 28.0-40.1 min region on the linkage map.</title>
        <authorList>
            <person name="Aiba H."/>
            <person name="Baba T."/>
            <person name="Fujita K."/>
            <person name="Hayashi K."/>
            <person name="Inada T."/>
            <person name="Isono K."/>
            <person name="Itoh T."/>
            <person name="Kasai H."/>
            <person name="Kashimoto K."/>
            <person name="Kimura S."/>
            <person name="Kitakawa M."/>
            <person name="Kitagawa M."/>
            <person name="Makino K."/>
            <person name="Miki T."/>
            <person name="Mizobuchi K."/>
            <person name="Mori H."/>
            <person name="Mori T."/>
            <person name="Motomura K."/>
            <person name="Nakade S."/>
            <person name="Nakamura Y."/>
            <person name="Nashimoto H."/>
            <person name="Nishio Y."/>
            <person name="Oshima T."/>
            <person name="Saito N."/>
            <person name="Sampei G."/>
            <person name="Seki Y."/>
            <person name="Sivasundaram S."/>
            <person name="Tagami H."/>
            <person name="Takeda J."/>
            <person name="Takemoto K."/>
            <person name="Takeuchi Y."/>
            <person name="Wada C."/>
            <person name="Yamamoto Y."/>
            <person name="Horiuchi T."/>
        </authorList>
    </citation>
    <scope>NUCLEOTIDE SEQUENCE [LARGE SCALE GENOMIC DNA]</scope>
    <source>
        <strain>K12 / W3110 / ATCC 27325 / DSM 5911</strain>
    </source>
</reference>
<reference key="2">
    <citation type="journal article" date="1997" name="Science">
        <title>The complete genome sequence of Escherichia coli K-12.</title>
        <authorList>
            <person name="Blattner F.R."/>
            <person name="Plunkett G. III"/>
            <person name="Bloch C.A."/>
            <person name="Perna N.T."/>
            <person name="Burland V."/>
            <person name="Riley M."/>
            <person name="Collado-Vides J."/>
            <person name="Glasner J.D."/>
            <person name="Rode C.K."/>
            <person name="Mayhew G.F."/>
            <person name="Gregor J."/>
            <person name="Davis N.W."/>
            <person name="Kirkpatrick H.A."/>
            <person name="Goeden M.A."/>
            <person name="Rose D.J."/>
            <person name="Mau B."/>
            <person name="Shao Y."/>
        </authorList>
    </citation>
    <scope>NUCLEOTIDE SEQUENCE [LARGE SCALE GENOMIC DNA]</scope>
    <source>
        <strain>K12 / MG1655 / ATCC 47076</strain>
    </source>
</reference>
<reference key="3">
    <citation type="journal article" date="2006" name="Mol. Syst. Biol.">
        <title>Highly accurate genome sequences of Escherichia coli K-12 strains MG1655 and W3110.</title>
        <authorList>
            <person name="Hayashi K."/>
            <person name="Morooka N."/>
            <person name="Yamamoto Y."/>
            <person name="Fujita K."/>
            <person name="Isono K."/>
            <person name="Choi S."/>
            <person name="Ohtsubo E."/>
            <person name="Baba T."/>
            <person name="Wanner B.L."/>
            <person name="Mori H."/>
            <person name="Horiuchi T."/>
        </authorList>
    </citation>
    <scope>NUCLEOTIDE SEQUENCE [LARGE SCALE GENOMIC DNA]</scope>
    <source>
        <strain>K12 / W3110 / ATCC 27325 / DSM 5911</strain>
    </source>
</reference>
<reference key="4">
    <citation type="journal article" date="1998" name="Chem. Biol.">
        <title>Homologs of the vancomycin resistance D-Ala-D-Ala dipeptidase VanX in Streptomyces toyocaensis, Escherichia coli and Synechocystis: attributes of catalytic efficiency, stereoselectivity and regulation with implications for function.</title>
        <authorList>
            <person name="Lessard I.A.D."/>
            <person name="Pratt S.D."/>
            <person name="McCafferty D.G."/>
            <person name="Bussiere D.E."/>
            <person name="Hutchins C."/>
            <person name="Wanner B.L."/>
            <person name="Katz L."/>
            <person name="Walsh C.T."/>
        </authorList>
    </citation>
    <scope>INDUCTION</scope>
</reference>
<reference key="5">
    <citation type="journal article" date="1999" name="Proc. Natl. Acad. Sci. U.S.A.">
        <title>VanX, a bacterial D-alanyl-D-alanine dipeptidase: resistance, immunity, or survival function?</title>
        <authorList>
            <person name="Lessard I.A.D."/>
            <person name="Walsh C.T."/>
        </authorList>
    </citation>
    <scope>GENE NAME</scope>
</reference>
<name>DDPF_ECOLI</name>
<proteinExistence type="evidence at transcript level"/>
<keyword id="KW-0067">ATP-binding</keyword>
<keyword id="KW-0997">Cell inner membrane</keyword>
<keyword id="KW-1003">Cell membrane</keyword>
<keyword id="KW-0472">Membrane</keyword>
<keyword id="KW-0547">Nucleotide-binding</keyword>
<keyword id="KW-0571">Peptide transport</keyword>
<keyword id="KW-0653">Protein transport</keyword>
<keyword id="KW-1185">Reference proteome</keyword>
<keyword id="KW-0813">Transport</keyword>
<feature type="chain" id="PRO_0000093164" description="Probable D,D-dipeptide transport ATP-binding protein DdpF">
    <location>
        <begin position="1"/>
        <end position="308"/>
    </location>
</feature>
<feature type="domain" description="ABC transporter" evidence="1">
    <location>
        <begin position="8"/>
        <end position="243"/>
    </location>
</feature>
<feature type="binding site" evidence="1">
    <location>
        <begin position="49"/>
        <end position="56"/>
    </location>
    <ligand>
        <name>ATP</name>
        <dbReference type="ChEBI" id="CHEBI:30616"/>
    </ligand>
</feature>
<dbReference type="EMBL" id="U00096">
    <property type="protein sequence ID" value="AAC74556.1"/>
    <property type="molecule type" value="Genomic_DNA"/>
</dbReference>
<dbReference type="EMBL" id="AP009048">
    <property type="protein sequence ID" value="BAA15138.1"/>
    <property type="molecule type" value="Genomic_DNA"/>
</dbReference>
<dbReference type="PIR" id="F64901">
    <property type="entry name" value="F64901"/>
</dbReference>
<dbReference type="RefSeq" id="NP_416000.1">
    <property type="nucleotide sequence ID" value="NC_000913.3"/>
</dbReference>
<dbReference type="RefSeq" id="WP_001285536.1">
    <property type="nucleotide sequence ID" value="NZ_LN832404.1"/>
</dbReference>
<dbReference type="SMR" id="P77622"/>
<dbReference type="BioGRID" id="4260961">
    <property type="interactions" value="100"/>
</dbReference>
<dbReference type="ComplexPortal" id="CPX-4321">
    <property type="entry name" value="Dipeptide ABC transporter complex"/>
</dbReference>
<dbReference type="FunCoup" id="P77622">
    <property type="interactions" value="106"/>
</dbReference>
<dbReference type="IntAct" id="P77622">
    <property type="interactions" value="2"/>
</dbReference>
<dbReference type="STRING" id="511145.b1483"/>
<dbReference type="TCDB" id="3.A.1.5.38">
    <property type="family name" value="the atp-binding cassette (abc) superfamily"/>
</dbReference>
<dbReference type="PaxDb" id="511145-b1483"/>
<dbReference type="EnsemblBacteria" id="AAC74556">
    <property type="protein sequence ID" value="AAC74556"/>
    <property type="gene ID" value="b1483"/>
</dbReference>
<dbReference type="GeneID" id="946020"/>
<dbReference type="KEGG" id="ecj:JW1478"/>
<dbReference type="KEGG" id="eco:b1483"/>
<dbReference type="KEGG" id="ecoc:C3026_08595"/>
<dbReference type="PATRIC" id="fig|1411691.4.peg.784"/>
<dbReference type="EchoBASE" id="EB3547"/>
<dbReference type="eggNOG" id="COG4608">
    <property type="taxonomic scope" value="Bacteria"/>
</dbReference>
<dbReference type="HOGENOM" id="CLU_000604_1_23_6"/>
<dbReference type="InParanoid" id="P77622"/>
<dbReference type="OMA" id="IGIMYRG"/>
<dbReference type="OrthoDB" id="9784450at2"/>
<dbReference type="PhylomeDB" id="P77622"/>
<dbReference type="BioCyc" id="EcoCyc:YDDO-MONOMER"/>
<dbReference type="PRO" id="PR:P77622"/>
<dbReference type="Proteomes" id="UP000000625">
    <property type="component" value="Chromosome"/>
</dbReference>
<dbReference type="GO" id="GO:0055052">
    <property type="term" value="C:ATP-binding cassette (ABC) transporter complex, substrate-binding subunit-containing"/>
    <property type="evidence" value="ECO:0000303"/>
    <property type="project" value="ComplexPortal"/>
</dbReference>
<dbReference type="GO" id="GO:0016020">
    <property type="term" value="C:membrane"/>
    <property type="evidence" value="ECO:0000303"/>
    <property type="project" value="ComplexPortal"/>
</dbReference>
<dbReference type="GO" id="GO:0005524">
    <property type="term" value="F:ATP binding"/>
    <property type="evidence" value="ECO:0007669"/>
    <property type="project" value="UniProtKB-KW"/>
</dbReference>
<dbReference type="GO" id="GO:0016887">
    <property type="term" value="F:ATP hydrolysis activity"/>
    <property type="evidence" value="ECO:0007669"/>
    <property type="project" value="InterPro"/>
</dbReference>
<dbReference type="GO" id="GO:0042938">
    <property type="term" value="P:dipeptide transport"/>
    <property type="evidence" value="ECO:0000303"/>
    <property type="project" value="ComplexPortal"/>
</dbReference>
<dbReference type="GO" id="GO:0015031">
    <property type="term" value="P:protein transport"/>
    <property type="evidence" value="ECO:0007669"/>
    <property type="project" value="UniProtKB-KW"/>
</dbReference>
<dbReference type="GO" id="GO:0055085">
    <property type="term" value="P:transmembrane transport"/>
    <property type="evidence" value="ECO:0007669"/>
    <property type="project" value="UniProtKB-ARBA"/>
</dbReference>
<dbReference type="CDD" id="cd03257">
    <property type="entry name" value="ABC_NikE_OppD_transporters"/>
    <property type="match status" value="1"/>
</dbReference>
<dbReference type="Gene3D" id="3.40.50.300">
    <property type="entry name" value="P-loop containing nucleotide triphosphate hydrolases"/>
    <property type="match status" value="1"/>
</dbReference>
<dbReference type="InterPro" id="IPR003593">
    <property type="entry name" value="AAA+_ATPase"/>
</dbReference>
<dbReference type="InterPro" id="IPR050319">
    <property type="entry name" value="ABC_transp_ATP-bind"/>
</dbReference>
<dbReference type="InterPro" id="IPR003439">
    <property type="entry name" value="ABC_transporter-like_ATP-bd"/>
</dbReference>
<dbReference type="InterPro" id="IPR017871">
    <property type="entry name" value="ABC_transporter-like_CS"/>
</dbReference>
<dbReference type="InterPro" id="IPR013563">
    <property type="entry name" value="Oligopep_ABC_C"/>
</dbReference>
<dbReference type="InterPro" id="IPR027417">
    <property type="entry name" value="P-loop_NTPase"/>
</dbReference>
<dbReference type="NCBIfam" id="TIGR01727">
    <property type="entry name" value="oligo_HPY"/>
    <property type="match status" value="1"/>
</dbReference>
<dbReference type="PANTHER" id="PTHR43776:SF7">
    <property type="entry name" value="D,D-DIPEPTIDE TRANSPORT ATP-BINDING PROTEIN DDPF-RELATED"/>
    <property type="match status" value="1"/>
</dbReference>
<dbReference type="PANTHER" id="PTHR43776">
    <property type="entry name" value="TRANSPORT ATP-BINDING PROTEIN"/>
    <property type="match status" value="1"/>
</dbReference>
<dbReference type="Pfam" id="PF00005">
    <property type="entry name" value="ABC_tran"/>
    <property type="match status" value="1"/>
</dbReference>
<dbReference type="Pfam" id="PF08352">
    <property type="entry name" value="oligo_HPY"/>
    <property type="match status" value="1"/>
</dbReference>
<dbReference type="SMART" id="SM00382">
    <property type="entry name" value="AAA"/>
    <property type="match status" value="1"/>
</dbReference>
<dbReference type="SUPFAM" id="SSF52540">
    <property type="entry name" value="P-loop containing nucleoside triphosphate hydrolases"/>
    <property type="match status" value="1"/>
</dbReference>
<dbReference type="PROSITE" id="PS00211">
    <property type="entry name" value="ABC_TRANSPORTER_1"/>
    <property type="match status" value="1"/>
</dbReference>
<dbReference type="PROSITE" id="PS50893">
    <property type="entry name" value="ABC_TRANSPORTER_2"/>
    <property type="match status" value="1"/>
</dbReference>
<organism>
    <name type="scientific">Escherichia coli (strain K12)</name>
    <dbReference type="NCBI Taxonomy" id="83333"/>
    <lineage>
        <taxon>Bacteria</taxon>
        <taxon>Pseudomonadati</taxon>
        <taxon>Pseudomonadota</taxon>
        <taxon>Gammaproteobacteria</taxon>
        <taxon>Enterobacterales</taxon>
        <taxon>Enterobacteriaceae</taxon>
        <taxon>Escherichia</taxon>
    </lineage>
</organism>
<sequence>MSDTLLTLRDVHINFPARKNWLGKTTEHVHAINGIDLQIRRGETLGIVGESGCGKSTLAQLLMGMLQPSHGQYIRSGSQRIMQMVFQDPLSSLNPRLPVWRIITEPLWIAKRSSEQQRRALAEELAVQVGIRPEYLDRLPHAFSGGQRQRIAIARALSSQPDVIVLDEPTSALDISVQAQILNLLVTLQENHGLTYVLISHNVSVIRHMSDRVAVMYLGQIVELGDAQQVLTAPAHPYTRLLLDSLPAIDKPLEEEWALRKTDLPGNRTLPQGCFFYERCPLATHGCEVRQSLAIREDGRELRCWRAL</sequence>
<accession>P77622</accession>
<accession>P76870</accession>